<evidence type="ECO:0000250" key="1">
    <source>
        <dbReference type="UniProtKB" id="Q9L268"/>
    </source>
</evidence>
<evidence type="ECO:0000269" key="2">
    <source>
    </source>
</evidence>
<evidence type="ECO:0000269" key="3">
    <source>
    </source>
</evidence>
<evidence type="ECO:0000303" key="4">
    <source>
    </source>
</evidence>
<evidence type="ECO:0000305" key="5"/>
<evidence type="ECO:0000312" key="6">
    <source>
        <dbReference type="EMBL" id="AAZ56144.1"/>
    </source>
</evidence>
<evidence type="ECO:0007744" key="7">
    <source>
        <dbReference type="PDB" id="3CM1"/>
    </source>
</evidence>
<evidence type="ECO:0007829" key="8">
    <source>
        <dbReference type="PDB" id="3CM1"/>
    </source>
</evidence>
<reference evidence="7" key="1">
    <citation type="journal article" date="2009" name="J. Biol. Chem.">
        <title>Structural and functional characterizations of SsgB, a conserved activator of developmental cell division in morphologically complex actinomycetes.</title>
        <authorList>
            <person name="Xu Q."/>
            <person name="Traag B.A."/>
            <person name="Willemse J."/>
            <person name="McMullan D."/>
            <person name="Miller M.D."/>
            <person name="Elsliger M.A."/>
            <person name="Abdubek P."/>
            <person name="Astakhova T."/>
            <person name="Axelrod H.L."/>
            <person name="Bakolitsa C."/>
            <person name="Carlton D."/>
            <person name="Chen C."/>
            <person name="Chiu H.J."/>
            <person name="Chruszcz M."/>
            <person name="Clayton T."/>
            <person name="Das D."/>
            <person name="Deller M.C."/>
            <person name="Duan L."/>
            <person name="Ellrott K."/>
            <person name="Ernst D."/>
            <person name="Farr C.L."/>
            <person name="Feuerhelm J."/>
            <person name="Grant J.C."/>
            <person name="Grzechnik A."/>
            <person name="Grzechnik S.K."/>
            <person name="Han G.W."/>
            <person name="Jaroszewski L."/>
            <person name="Jin K.K."/>
            <person name="Klock H.E."/>
            <person name="Knuth M.W."/>
            <person name="Kozbial P."/>
            <person name="Krishna S.S."/>
            <person name="Kumar A."/>
            <person name="Marciano D."/>
            <person name="Minor W."/>
            <person name="Mommaas A.M."/>
            <person name="Morse A.T."/>
            <person name="Nigoghossian E."/>
            <person name="Nopakun A."/>
            <person name="Okach L."/>
            <person name="Oommachen S."/>
            <person name="Paulsen J."/>
            <person name="Puckett C."/>
            <person name="Reyes R."/>
            <person name="Rife C.L."/>
            <person name="Sefcovic N."/>
            <person name="Tien H.J."/>
            <person name="Trame C.B."/>
            <person name="van den Bedem H."/>
            <person name="Wang S."/>
            <person name="Weekes D."/>
            <person name="Hodgson K.O."/>
            <person name="Wooley J."/>
            <person name="Deacon A.M."/>
            <person name="Godzik A."/>
            <person name="Lesley S.A."/>
            <person name="Wilson I.A."/>
            <person name="van Wezel G.P."/>
        </authorList>
    </citation>
    <scope>NUCLEOTIDE SEQUENCE [GENOMIC DNA]</scope>
    <scope>X-RAY CRYSTALLOGRAPHY (2.60 ANGSTROMS)</scope>
    <scope>FUNCTION</scope>
    <scope>SUBUNIT</scope>
    <source>
        <strain evidence="4">YX</strain>
    </source>
</reference>
<reference key="2">
    <citation type="journal article" date="2007" name="J. Bacteriol.">
        <title>Genome sequence and analysis of the soil cellulolytic actinomycete Thermobifida fusca YX.</title>
        <authorList>
            <person name="Lykidis A."/>
            <person name="Mavromatis K."/>
            <person name="Ivanova N."/>
            <person name="Anderson I."/>
            <person name="Land M."/>
            <person name="DiBartolo G."/>
            <person name="Martinez M."/>
            <person name="Lapidus A."/>
            <person name="Lucas S."/>
            <person name="Copeland A."/>
            <person name="Richardson P."/>
            <person name="Wilson D.B."/>
            <person name="Kyrpides N."/>
        </authorList>
    </citation>
    <scope>NUCLEOTIDE SEQUENCE [LARGE SCALE GENOMIC DNA]</scope>
    <source>
        <strain>YX</strain>
    </source>
</reference>
<reference key="3">
    <citation type="journal article" date="2011" name="Genes Dev.">
        <title>Positive control of cell division: FtsZ is recruited by SsgB during sporulation of Streptomyces.</title>
        <authorList>
            <person name="Willemse J."/>
            <person name="Borst J.W."/>
            <person name="de Waal E."/>
            <person name="Bisseling T."/>
            <person name="van Wezel G.P."/>
        </authorList>
    </citation>
    <scope>FUNCTION</scope>
    <scope>INTERACTION WITH FTSZ AND SSGA</scope>
</reference>
<protein>
    <recommendedName>
        <fullName evidence="4">Sporulation-specific cell division protein SsgB</fullName>
    </recommendedName>
    <alternativeName>
        <fullName evidence="4">Sporulation of Streptomyces griseus-like protein B</fullName>
    </alternativeName>
    <alternativeName>
        <fullName evidence="4">SsgA-like protein B</fullName>
        <shortName evidence="4">SALP B</shortName>
    </alternativeName>
</protein>
<sequence>MSSSGTSITCEVGLQLIVPDRAPVPLVARLDYSVDDPYAIRAAFHVGDDEPVEWIFARELLTVGIIRETGEGDVRIWPSQDGKERMVNIALSSPFGQARFHAQVAPLSEFLHRTYELVPAGQESDYIDIDAEIAEHLS</sequence>
<dbReference type="EMBL" id="CP000088">
    <property type="protein sequence ID" value="AAZ56144.1"/>
    <property type="molecule type" value="Genomic_DNA"/>
</dbReference>
<dbReference type="RefSeq" id="WP_011292534.1">
    <property type="nucleotide sequence ID" value="NC_007333.1"/>
</dbReference>
<dbReference type="PDB" id="3CM1">
    <property type="method" value="X-ray"/>
    <property type="resolution" value="2.60 A"/>
    <property type="chains" value="A/B/C=1-138"/>
</dbReference>
<dbReference type="PDBsum" id="3CM1"/>
<dbReference type="SMR" id="Q47N25"/>
<dbReference type="STRING" id="269800.Tfu_2111"/>
<dbReference type="DNASU" id="3581046"/>
<dbReference type="KEGG" id="tfu:Tfu_2111"/>
<dbReference type="eggNOG" id="ENOG5032RFA">
    <property type="taxonomic scope" value="Bacteria"/>
</dbReference>
<dbReference type="HOGENOM" id="CLU_126599_0_1_11"/>
<dbReference type="OrthoDB" id="3853096at2"/>
<dbReference type="EvolutionaryTrace" id="Q47N25"/>
<dbReference type="GO" id="GO:0030428">
    <property type="term" value="C:cell septum"/>
    <property type="evidence" value="ECO:0007669"/>
    <property type="project" value="UniProtKB-SubCell"/>
</dbReference>
<dbReference type="GO" id="GO:0000917">
    <property type="term" value="P:division septum assembly"/>
    <property type="evidence" value="ECO:0007669"/>
    <property type="project" value="UniProtKB-KW"/>
</dbReference>
<dbReference type="GO" id="GO:2000246">
    <property type="term" value="P:positive regulation of FtsZ-dependent cytokinesis"/>
    <property type="evidence" value="ECO:0000314"/>
    <property type="project" value="UniProtKB"/>
</dbReference>
<dbReference type="GO" id="GO:0030435">
    <property type="term" value="P:sporulation resulting in formation of a cellular spore"/>
    <property type="evidence" value="ECO:0007669"/>
    <property type="project" value="UniProtKB-KW"/>
</dbReference>
<dbReference type="Gene3D" id="2.30.31.20">
    <property type="entry name" value="Sporulation-specific cell division protein SsgB"/>
    <property type="match status" value="1"/>
</dbReference>
<dbReference type="InterPro" id="IPR006776">
    <property type="entry name" value="SsgB"/>
</dbReference>
<dbReference type="InterPro" id="IPR038658">
    <property type="entry name" value="SsgB_sf"/>
</dbReference>
<dbReference type="Pfam" id="PF04686">
    <property type="entry name" value="SsgA"/>
    <property type="match status" value="1"/>
</dbReference>
<accession>Q47N25</accession>
<gene>
    <name evidence="4" type="primary">ssgB</name>
    <name evidence="6" type="ordered locus">Tfu_2111</name>
</gene>
<keyword id="KW-0002">3D-structure</keyword>
<keyword id="KW-0131">Cell cycle</keyword>
<keyword id="KW-0132">Cell division</keyword>
<keyword id="KW-0717">Septation</keyword>
<keyword id="KW-0749">Sporulation</keyword>
<feature type="chain" id="PRO_0000435022" description="Sporulation-specific cell division protein SsgB">
    <location>
        <begin position="1"/>
        <end position="138"/>
    </location>
</feature>
<feature type="strand" evidence="8">
    <location>
        <begin position="7"/>
        <end position="17"/>
    </location>
</feature>
<feature type="strand" evidence="8">
    <location>
        <begin position="24"/>
        <end position="33"/>
    </location>
</feature>
<feature type="strand" evidence="8">
    <location>
        <begin position="39"/>
        <end position="45"/>
    </location>
</feature>
<feature type="strand" evidence="8">
    <location>
        <begin position="52"/>
        <end position="57"/>
    </location>
</feature>
<feature type="helix" evidence="8">
    <location>
        <begin position="58"/>
        <end position="64"/>
    </location>
</feature>
<feature type="strand" evidence="8">
    <location>
        <begin position="69"/>
        <end position="71"/>
    </location>
</feature>
<feature type="strand" evidence="8">
    <location>
        <begin position="74"/>
        <end position="81"/>
    </location>
</feature>
<feature type="strand" evidence="8">
    <location>
        <begin position="84"/>
        <end position="91"/>
    </location>
</feature>
<feature type="strand" evidence="8">
    <location>
        <begin position="98"/>
        <end position="103"/>
    </location>
</feature>
<feature type="helix" evidence="8">
    <location>
        <begin position="104"/>
        <end position="117"/>
    </location>
</feature>
<feature type="helix" evidence="8">
    <location>
        <begin position="123"/>
        <end position="134"/>
    </location>
</feature>
<comment type="function">
    <text evidence="1 2 3">Involved in sporulation-specific cell division (PubMed:19567872). Required for early stages of sporulation. Important in the process of growth cessation prior to sporulation-specific cell division. Recruits cell division protein FtsZ to the future septum sites and tethers the contractile ring structure (Z ring) to the cytoplasmic membrane during sporulation (By similarity). Stimulates polymerization and filament length of FtsZ in vitro (PubMed:21205868).</text>
</comment>
<comment type="subunit">
    <text evidence="2 3">Monomer (PubMed:19567872). Interacts with SsgA. Interacts with FtsZ (via N-terminus) (PubMed:21205868).</text>
</comment>
<comment type="subcellular location">
    <subcellularLocation>
        <location evidence="1">Cell septum</location>
    </subcellularLocation>
    <text evidence="1">Localizes to the divisome in sporogenic aerial hyphae in a ladder-like manner. Temporospatial localization is controlled by SsgA and it colocalizes with SsgA in presporulation foci. Localizes to the septum sites prior to FtsZ and after that colocalizes with FtsZ at the divisome throughout cell division.</text>
</comment>
<comment type="similarity">
    <text evidence="5">Belongs to the SsgA family.</text>
</comment>
<proteinExistence type="evidence at protein level"/>
<organism evidence="6">
    <name type="scientific">Thermobifida fusca (strain YX)</name>
    <dbReference type="NCBI Taxonomy" id="269800"/>
    <lineage>
        <taxon>Bacteria</taxon>
        <taxon>Bacillati</taxon>
        <taxon>Actinomycetota</taxon>
        <taxon>Actinomycetes</taxon>
        <taxon>Streptosporangiales</taxon>
        <taxon>Nocardiopsidaceae</taxon>
        <taxon>Thermobifida</taxon>
    </lineage>
</organism>
<name>SSGB_THEFY</name>